<accession>Q6LR94</accession>
<name>MATP_PHOPR</name>
<dbReference type="EMBL" id="CR378668">
    <property type="protein sequence ID" value="CAG20182.1"/>
    <property type="molecule type" value="Genomic_DNA"/>
</dbReference>
<dbReference type="RefSeq" id="WP_011218490.1">
    <property type="nucleotide sequence ID" value="NC_006370.1"/>
</dbReference>
<dbReference type="SMR" id="Q6LR94"/>
<dbReference type="STRING" id="298386.PBPRA1775"/>
<dbReference type="KEGG" id="ppr:PBPRA1775"/>
<dbReference type="eggNOG" id="COG3120">
    <property type="taxonomic scope" value="Bacteria"/>
</dbReference>
<dbReference type="HOGENOM" id="CLU_142157_0_0_6"/>
<dbReference type="Proteomes" id="UP000000593">
    <property type="component" value="Chromosome 1"/>
</dbReference>
<dbReference type="GO" id="GO:0005737">
    <property type="term" value="C:cytoplasm"/>
    <property type="evidence" value="ECO:0007669"/>
    <property type="project" value="UniProtKB-SubCell"/>
</dbReference>
<dbReference type="GO" id="GO:0043565">
    <property type="term" value="F:sequence-specific DNA binding"/>
    <property type="evidence" value="ECO:0007669"/>
    <property type="project" value="UniProtKB-UniRule"/>
</dbReference>
<dbReference type="GO" id="GO:0051301">
    <property type="term" value="P:cell division"/>
    <property type="evidence" value="ECO:0007669"/>
    <property type="project" value="UniProtKB-UniRule"/>
</dbReference>
<dbReference type="GO" id="GO:0006355">
    <property type="term" value="P:regulation of DNA-templated transcription"/>
    <property type="evidence" value="ECO:0007669"/>
    <property type="project" value="InterPro"/>
</dbReference>
<dbReference type="Gene3D" id="1.20.1270.380">
    <property type="entry name" value="MatP, N-terminal domain"/>
    <property type="match status" value="1"/>
</dbReference>
<dbReference type="Gene3D" id="1.10.1220.10">
    <property type="entry name" value="Met repressor-like"/>
    <property type="match status" value="1"/>
</dbReference>
<dbReference type="HAMAP" id="MF_01073">
    <property type="entry name" value="MatP"/>
    <property type="match status" value="1"/>
</dbReference>
<dbReference type="InterPro" id="IPR013321">
    <property type="entry name" value="Arc_rbn_hlx_hlx"/>
</dbReference>
<dbReference type="InterPro" id="IPR009390">
    <property type="entry name" value="MatP"/>
</dbReference>
<dbReference type="InterPro" id="IPR035375">
    <property type="entry name" value="MatP_C"/>
</dbReference>
<dbReference type="InterPro" id="IPR035087">
    <property type="entry name" value="MatP_N"/>
</dbReference>
<dbReference type="InterPro" id="IPR038339">
    <property type="entry name" value="MatP_N_sf"/>
</dbReference>
<dbReference type="NCBIfam" id="NF003471">
    <property type="entry name" value="PRK05097.1"/>
    <property type="match status" value="1"/>
</dbReference>
<dbReference type="Pfam" id="PF06303">
    <property type="entry name" value="MatP"/>
    <property type="match status" value="1"/>
</dbReference>
<dbReference type="Pfam" id="PF17414">
    <property type="entry name" value="MatP_C"/>
    <property type="match status" value="1"/>
</dbReference>
<evidence type="ECO:0000255" key="1">
    <source>
        <dbReference type="HAMAP-Rule" id="MF_01073"/>
    </source>
</evidence>
<gene>
    <name evidence="1" type="primary">matP</name>
    <name type="ordered locus">PBPRA1775</name>
</gene>
<organism>
    <name type="scientific">Photobacterium profundum (strain SS9)</name>
    <dbReference type="NCBI Taxonomy" id="298386"/>
    <lineage>
        <taxon>Bacteria</taxon>
        <taxon>Pseudomonadati</taxon>
        <taxon>Pseudomonadota</taxon>
        <taxon>Gammaproteobacteria</taxon>
        <taxon>Vibrionales</taxon>
        <taxon>Vibrionaceae</taxon>
        <taxon>Photobacterium</taxon>
    </lineage>
</organism>
<proteinExistence type="inferred from homology"/>
<protein>
    <recommendedName>
        <fullName evidence="1">Macrodomain Ter protein</fullName>
    </recommendedName>
</protein>
<feature type="chain" id="PRO_0000070354" description="Macrodomain Ter protein">
    <location>
        <begin position="1"/>
        <end position="148"/>
    </location>
</feature>
<keyword id="KW-0131">Cell cycle</keyword>
<keyword id="KW-0132">Cell division</keyword>
<keyword id="KW-0963">Cytoplasm</keyword>
<keyword id="KW-0238">DNA-binding</keyword>
<keyword id="KW-1185">Reference proteome</keyword>
<sequence length="148" mass="17371">MKYQQLENLEAGWKWTYLVKKWKEEEAITCHIDSSEAEAAIQSLLTIEHEPTKVIEWIDKHMSPALENKLKQAIRAKRKRHFNAEQVHTRKKSIDLDYRVWEKLAEKSQELGSTLSDTIEYLLSESNRTETVTKTVSDIRKDLSDLLD</sequence>
<comment type="function">
    <text evidence="1">Required for spatial organization of the terminus region of the chromosome (Ter macrodomain) during the cell cycle. Prevents early segregation of duplicated Ter macrodomains during cell division. Binds specifically to matS, which is a 13 bp signature motif repeated within the Ter macrodomain.</text>
</comment>
<comment type="subunit">
    <text evidence="1">Homodimer.</text>
</comment>
<comment type="subcellular location">
    <subcellularLocation>
        <location evidence="1">Cytoplasm</location>
    </subcellularLocation>
</comment>
<comment type="similarity">
    <text evidence="1">Belongs to the MatP family.</text>
</comment>
<reference key="1">
    <citation type="journal article" date="2005" name="Science">
        <title>Life at depth: Photobacterium profundum genome sequence and expression analysis.</title>
        <authorList>
            <person name="Vezzi A."/>
            <person name="Campanaro S."/>
            <person name="D'Angelo M."/>
            <person name="Simonato F."/>
            <person name="Vitulo N."/>
            <person name="Lauro F.M."/>
            <person name="Cestaro A."/>
            <person name="Malacrida G."/>
            <person name="Simionati B."/>
            <person name="Cannata N."/>
            <person name="Romualdi C."/>
            <person name="Bartlett D.H."/>
            <person name="Valle G."/>
        </authorList>
    </citation>
    <scope>NUCLEOTIDE SEQUENCE [LARGE SCALE GENOMIC DNA]</scope>
    <source>
        <strain>ATCC BAA-1253 / SS9</strain>
    </source>
</reference>